<reference key="1">
    <citation type="submission" date="2006-12" db="EMBL/GenBank/DDBJ databases">
        <title>Complete sequence of Acidovorax avenae subsp. citrulli AAC00-1.</title>
        <authorList>
            <person name="Copeland A."/>
            <person name="Lucas S."/>
            <person name="Lapidus A."/>
            <person name="Barry K."/>
            <person name="Detter J.C."/>
            <person name="Glavina del Rio T."/>
            <person name="Dalin E."/>
            <person name="Tice H."/>
            <person name="Pitluck S."/>
            <person name="Kiss H."/>
            <person name="Brettin T."/>
            <person name="Bruce D."/>
            <person name="Han C."/>
            <person name="Tapia R."/>
            <person name="Gilna P."/>
            <person name="Schmutz J."/>
            <person name="Larimer F."/>
            <person name="Land M."/>
            <person name="Hauser L."/>
            <person name="Kyrpides N."/>
            <person name="Kim E."/>
            <person name="Stahl D."/>
            <person name="Richardson P."/>
        </authorList>
    </citation>
    <scope>NUCLEOTIDE SEQUENCE [LARGE SCALE GENOMIC DNA]</scope>
    <source>
        <strain>AAC00-1</strain>
    </source>
</reference>
<comment type="function">
    <text evidence="1">Binds as a heterodimer with protein bS6 to the central domain of the 16S rRNA, where it helps stabilize the platform of the 30S subunit.</text>
</comment>
<comment type="subunit">
    <text evidence="1">Part of the 30S ribosomal subunit. Forms a tight heterodimer with protein bS6.</text>
</comment>
<comment type="similarity">
    <text evidence="1">Belongs to the bacterial ribosomal protein bS18 family.</text>
</comment>
<feature type="chain" id="PRO_1000003432" description="Small ribosomal subunit protein bS18">
    <location>
        <begin position="1"/>
        <end position="93"/>
    </location>
</feature>
<sequence>MATFKKFNKDKRPKRNTQSLLFKRKRFCRFTVAGVEEIDYKDVDTLRDFIAENGKIIPARLTGTRAIYQRQLNTAIKRARFLALVPYSDQHKI</sequence>
<accession>A1TLI3</accession>
<organism>
    <name type="scientific">Paracidovorax citrulli (strain AAC00-1)</name>
    <name type="common">Acidovorax citrulli</name>
    <dbReference type="NCBI Taxonomy" id="397945"/>
    <lineage>
        <taxon>Bacteria</taxon>
        <taxon>Pseudomonadati</taxon>
        <taxon>Pseudomonadota</taxon>
        <taxon>Betaproteobacteria</taxon>
        <taxon>Burkholderiales</taxon>
        <taxon>Comamonadaceae</taxon>
        <taxon>Paracidovorax</taxon>
    </lineage>
</organism>
<evidence type="ECO:0000255" key="1">
    <source>
        <dbReference type="HAMAP-Rule" id="MF_00270"/>
    </source>
</evidence>
<evidence type="ECO:0000305" key="2"/>
<dbReference type="EMBL" id="CP000512">
    <property type="protein sequence ID" value="ABM31821.1"/>
    <property type="molecule type" value="Genomic_DNA"/>
</dbReference>
<dbReference type="RefSeq" id="WP_011794373.1">
    <property type="nucleotide sequence ID" value="NC_008752.1"/>
</dbReference>
<dbReference type="SMR" id="A1TLI3"/>
<dbReference type="STRING" id="397945.Aave_1230"/>
<dbReference type="GeneID" id="34236547"/>
<dbReference type="GeneID" id="79790891"/>
<dbReference type="KEGG" id="aav:Aave_1230"/>
<dbReference type="eggNOG" id="COG0238">
    <property type="taxonomic scope" value="Bacteria"/>
</dbReference>
<dbReference type="HOGENOM" id="CLU_148710_0_3_4"/>
<dbReference type="OrthoDB" id="9812008at2"/>
<dbReference type="Proteomes" id="UP000002596">
    <property type="component" value="Chromosome"/>
</dbReference>
<dbReference type="GO" id="GO:0022627">
    <property type="term" value="C:cytosolic small ribosomal subunit"/>
    <property type="evidence" value="ECO:0007669"/>
    <property type="project" value="TreeGrafter"/>
</dbReference>
<dbReference type="GO" id="GO:0070181">
    <property type="term" value="F:small ribosomal subunit rRNA binding"/>
    <property type="evidence" value="ECO:0007669"/>
    <property type="project" value="TreeGrafter"/>
</dbReference>
<dbReference type="GO" id="GO:0003735">
    <property type="term" value="F:structural constituent of ribosome"/>
    <property type="evidence" value="ECO:0007669"/>
    <property type="project" value="InterPro"/>
</dbReference>
<dbReference type="GO" id="GO:0006412">
    <property type="term" value="P:translation"/>
    <property type="evidence" value="ECO:0007669"/>
    <property type="project" value="UniProtKB-UniRule"/>
</dbReference>
<dbReference type="Gene3D" id="4.10.640.10">
    <property type="entry name" value="Ribosomal protein S18"/>
    <property type="match status" value="1"/>
</dbReference>
<dbReference type="HAMAP" id="MF_00270">
    <property type="entry name" value="Ribosomal_bS18"/>
    <property type="match status" value="1"/>
</dbReference>
<dbReference type="InterPro" id="IPR001648">
    <property type="entry name" value="Ribosomal_bS18"/>
</dbReference>
<dbReference type="InterPro" id="IPR036870">
    <property type="entry name" value="Ribosomal_bS18_sf"/>
</dbReference>
<dbReference type="NCBIfam" id="TIGR00165">
    <property type="entry name" value="S18"/>
    <property type="match status" value="1"/>
</dbReference>
<dbReference type="PANTHER" id="PTHR13479">
    <property type="entry name" value="30S RIBOSOMAL PROTEIN S18"/>
    <property type="match status" value="1"/>
</dbReference>
<dbReference type="PANTHER" id="PTHR13479:SF40">
    <property type="entry name" value="SMALL RIBOSOMAL SUBUNIT PROTEIN BS18M"/>
    <property type="match status" value="1"/>
</dbReference>
<dbReference type="Pfam" id="PF01084">
    <property type="entry name" value="Ribosomal_S18"/>
    <property type="match status" value="1"/>
</dbReference>
<dbReference type="PRINTS" id="PR00974">
    <property type="entry name" value="RIBOSOMALS18"/>
</dbReference>
<dbReference type="SUPFAM" id="SSF46911">
    <property type="entry name" value="Ribosomal protein S18"/>
    <property type="match status" value="1"/>
</dbReference>
<protein>
    <recommendedName>
        <fullName evidence="1">Small ribosomal subunit protein bS18</fullName>
    </recommendedName>
    <alternativeName>
        <fullName evidence="2">30S ribosomal protein S18</fullName>
    </alternativeName>
</protein>
<name>RS18_PARC0</name>
<keyword id="KW-0687">Ribonucleoprotein</keyword>
<keyword id="KW-0689">Ribosomal protein</keyword>
<keyword id="KW-0694">RNA-binding</keyword>
<keyword id="KW-0699">rRNA-binding</keyword>
<gene>
    <name evidence="1" type="primary">rpsR</name>
    <name type="ordered locus">Aave_1230</name>
</gene>
<proteinExistence type="inferred from homology"/>